<protein>
    <recommendedName>
        <fullName>Tyrosine-protein kinase transmembrane receptor ROR2</fullName>
        <ecNumber evidence="16">2.7.10.1</ecNumber>
    </recommendedName>
    <alternativeName>
        <fullName>Neurotrophic tyrosine kinase, receptor-related 2</fullName>
    </alternativeName>
</protein>
<accession>Q01974</accession>
<accession>Q59GF5</accession>
<accession>Q5SPI5</accession>
<accession>Q9HAY7</accession>
<accession>Q9HB61</accession>
<keyword id="KW-0002">3D-structure</keyword>
<keyword id="KW-0067">ATP-binding</keyword>
<keyword id="KW-1003">Cell membrane</keyword>
<keyword id="KW-0217">Developmental protein</keyword>
<keyword id="KW-0903">Direct protein sequencing</keyword>
<keyword id="KW-0225">Disease variant</keyword>
<keyword id="KW-1015">Disulfide bond</keyword>
<keyword id="KW-0242">Dwarfism</keyword>
<keyword id="KW-0325">Glycoprotein</keyword>
<keyword id="KW-0393">Immunoglobulin domain</keyword>
<keyword id="KW-0418">Kinase</keyword>
<keyword id="KW-0420">Kringle</keyword>
<keyword id="KW-0460">Magnesium</keyword>
<keyword id="KW-0472">Membrane</keyword>
<keyword id="KW-0479">Metal-binding</keyword>
<keyword id="KW-0488">Methylation</keyword>
<keyword id="KW-0547">Nucleotide-binding</keyword>
<keyword id="KW-0597">Phosphoprotein</keyword>
<keyword id="KW-1267">Proteomics identification</keyword>
<keyword id="KW-0675">Receptor</keyword>
<keyword id="KW-1185">Reference proteome</keyword>
<keyword id="KW-0732">Signal</keyword>
<keyword id="KW-0765">Sulfation</keyword>
<keyword id="KW-0808">Transferase</keyword>
<keyword id="KW-0812">Transmembrane</keyword>
<keyword id="KW-1133">Transmembrane helix</keyword>
<keyword id="KW-0829">Tyrosine-protein kinase</keyword>
<keyword id="KW-0879">Wnt signaling pathway</keyword>
<proteinExistence type="evidence at protein level"/>
<comment type="function">
    <text evidence="2 16 17">Tyrosine-protein kinase receptor which may be involved in the early formation of the chondrocytes. It seems to be required for cartilage and growth plate development (By similarity). Phosphorylates YWHAB, leading to induction of osteogenesis and bone formation (PubMed:17717073). In contrast, has also been shown to have very little tyrosine kinase activity in vitro. May act as a receptor for wnt ligand WNT5A which may result in the inhibition of WNT3A-mediated signaling (PubMed:25029443).</text>
</comment>
<comment type="catalytic activity">
    <reaction evidence="7 16">
        <text>L-tyrosyl-[protein] + ATP = O-phospho-L-tyrosyl-[protein] + ADP + H(+)</text>
        <dbReference type="Rhea" id="RHEA:10596"/>
        <dbReference type="Rhea" id="RHEA-COMP:10136"/>
        <dbReference type="Rhea" id="RHEA-COMP:20101"/>
        <dbReference type="ChEBI" id="CHEBI:15378"/>
        <dbReference type="ChEBI" id="CHEBI:30616"/>
        <dbReference type="ChEBI" id="CHEBI:46858"/>
        <dbReference type="ChEBI" id="CHEBI:61978"/>
        <dbReference type="ChEBI" id="CHEBI:456216"/>
        <dbReference type="EC" id="2.7.10.1"/>
    </reaction>
</comment>
<comment type="cofactor">
    <cofactor evidence="16">
        <name>Mg(2+)</name>
        <dbReference type="ChEBI" id="CHEBI:18420"/>
    </cofactor>
</comment>
<comment type="subunit">
    <text evidence="2 16 18">Homodimer; promotes osteogenesis. Binds YWHAB (PubMed:17717073). Interacts with WTIP (By similarity). Interacts with ROR2 (PubMed:26035863).</text>
</comment>
<comment type="interaction">
    <interactant intactId="EBI-6422642">
        <id>Q01974</id>
    </interactant>
    <interactant intactId="EBI-11976299">
        <id>Q5BKX5-3</id>
        <label>ACTMAP</label>
    </interactant>
    <organismsDiffer>false</organismsDiffer>
    <experiments>3</experiments>
</comment>
<comment type="interaction">
    <interactant intactId="EBI-6422642">
        <id>Q01974</id>
    </interactant>
    <interactant intactId="EBI-10186621">
        <id>Q9NP73-4</id>
        <label>ALG13</label>
    </interactant>
    <organismsDiffer>false</organismsDiffer>
    <experiments>3</experiments>
</comment>
<comment type="interaction">
    <interactant intactId="EBI-6422642">
        <id>Q01974</id>
    </interactant>
    <interactant intactId="EBI-948603">
        <id>Q03989</id>
        <label>ARID5A</label>
    </interactant>
    <organismsDiffer>false</organismsDiffer>
    <experiments>3</experiments>
</comment>
<comment type="interaction">
    <interactant intactId="EBI-6422642">
        <id>Q01974</id>
    </interactant>
    <interactant intactId="EBI-711810">
        <id>O14503</id>
        <label>BHLHE40</label>
    </interactant>
    <organismsDiffer>false</organismsDiffer>
    <experiments>3</experiments>
</comment>
<comment type="interaction">
    <interactant intactId="EBI-6422642">
        <id>Q01974</id>
    </interactant>
    <interactant intactId="EBI-12809220">
        <id>Q5SWW7</id>
        <label>C10orf55</label>
    </interactant>
    <organismsDiffer>false</organismsDiffer>
    <experiments>3</experiments>
</comment>
<comment type="interaction">
    <interactant intactId="EBI-6422642">
        <id>Q01974</id>
    </interactant>
    <interactant intactId="EBI-946029">
        <id>Q6P1W5</id>
        <label>C1orf94</label>
    </interactant>
    <organismsDiffer>false</organismsDiffer>
    <experiments>3</experiments>
</comment>
<comment type="interaction">
    <interactant intactId="EBI-6422642">
        <id>Q01974</id>
    </interactant>
    <interactant intactId="EBI-12884642">
        <id>Q03060-25</id>
        <label>CREM</label>
    </interactant>
    <organismsDiffer>false</organismsDiffer>
    <experiments>3</experiments>
</comment>
<comment type="interaction">
    <interactant intactId="EBI-6422642">
        <id>Q01974</id>
    </interactant>
    <interactant intactId="EBI-748171">
        <id>O43186</id>
        <label>CRX</label>
    </interactant>
    <organismsDiffer>false</organismsDiffer>
    <experiments>4</experiments>
</comment>
<comment type="interaction">
    <interactant intactId="EBI-6422642">
        <id>Q01974</id>
    </interactant>
    <interactant intactId="EBI-724310">
        <id>Q15038</id>
        <label>DAZAP2</label>
    </interactant>
    <organismsDiffer>false</organismsDiffer>
    <experiments>8</experiments>
</comment>
<comment type="interaction">
    <interactant intactId="EBI-6422642">
        <id>Q01974</id>
    </interactant>
    <interactant intactId="EBI-12193763">
        <id>A1KXE4-2</id>
        <label>FAM168B</label>
    </interactant>
    <organismsDiffer>false</organismsDiffer>
    <experiments>3</experiments>
</comment>
<comment type="interaction">
    <interactant intactId="EBI-6422642">
        <id>Q01974</id>
    </interactant>
    <interactant intactId="EBI-2806743">
        <id>P53539</id>
        <label>FOSB</label>
    </interactant>
    <organismsDiffer>false</organismsDiffer>
    <experiments>3</experiments>
</comment>
<comment type="interaction">
    <interactant intactId="EBI-6422642">
        <id>Q01974</id>
    </interactant>
    <interactant intactId="EBI-352572">
        <id>P08238</id>
        <label>HSP90AB1</label>
    </interactant>
    <organismsDiffer>false</organismsDiffer>
    <experiments>2</experiments>
</comment>
<comment type="interaction">
    <interactant intactId="EBI-6422642">
        <id>Q01974</id>
    </interactant>
    <interactant intactId="EBI-6426064">
        <id>Q2M1V0</id>
        <label>ISX</label>
    </interactant>
    <organismsDiffer>false</organismsDiffer>
    <experiments>3</experiments>
</comment>
<comment type="interaction">
    <interactant intactId="EBI-6422642">
        <id>Q01974</id>
    </interactant>
    <interactant intactId="EBI-14308786">
        <id>A4D0Q3</id>
        <label>KIAA1218</label>
    </interactant>
    <organismsDiffer>false</organismsDiffer>
    <experiments>3</experiments>
</comment>
<comment type="interaction">
    <interactant intactId="EBI-6422642">
        <id>Q01974</id>
    </interactant>
    <interactant intactId="EBI-10241353">
        <id>Q3SYF9</id>
        <label>KRTAP19-7</label>
    </interactant>
    <organismsDiffer>false</organismsDiffer>
    <experiments>3</experiments>
</comment>
<comment type="interaction">
    <interactant intactId="EBI-6422642">
        <id>Q01974</id>
    </interactant>
    <interactant intactId="EBI-11962084">
        <id>Q3LI66</id>
        <label>KRTAP6-2</label>
    </interactant>
    <organismsDiffer>false</organismsDiffer>
    <experiments>3</experiments>
</comment>
<comment type="interaction">
    <interactant intactId="EBI-6422642">
        <id>Q01974</id>
    </interactant>
    <interactant intactId="EBI-18394498">
        <id>Q8IUC3</id>
        <label>KRTAP7-1</label>
    </interactant>
    <organismsDiffer>false</organismsDiffer>
    <experiments>3</experiments>
</comment>
<comment type="interaction">
    <interactant intactId="EBI-6422642">
        <id>Q01974</id>
    </interactant>
    <interactant intactId="EBI-10258746">
        <id>Q9UPM6</id>
        <label>LHX6</label>
    </interactant>
    <organismsDiffer>false</organismsDiffer>
    <experiments>3</experiments>
</comment>
<comment type="interaction">
    <interactant intactId="EBI-6422642">
        <id>Q01974</id>
    </interactant>
    <interactant intactId="EBI-6447480">
        <id>P35548</id>
        <label>MSX2</label>
    </interactant>
    <organismsDiffer>false</organismsDiffer>
    <experiments>3</experiments>
</comment>
<comment type="interaction">
    <interactant intactId="EBI-6422642">
        <id>Q01974</id>
    </interactant>
    <interactant intactId="EBI-748265">
        <id>P78337</id>
        <label>PITX1</label>
    </interactant>
    <organismsDiffer>false</organismsDiffer>
    <experiments>3</experiments>
</comment>
<comment type="interaction">
    <interactant intactId="EBI-6422642">
        <id>Q01974</id>
    </interactant>
    <interactant intactId="EBI-726466">
        <id>O15496</id>
        <label>PLA2G10</label>
    </interactant>
    <organismsDiffer>false</organismsDiffer>
    <experiments>3</experiments>
</comment>
<comment type="interaction">
    <interactant intactId="EBI-6422642">
        <id>Q01974</id>
    </interactant>
    <interactant intactId="EBI-943588">
        <id>Q16633</id>
        <label>POU2AF1</label>
    </interactant>
    <organismsDiffer>false</organismsDiffer>
    <experiments>3</experiments>
</comment>
<comment type="interaction">
    <interactant intactId="EBI-6422642">
        <id>Q01974</id>
    </interactant>
    <interactant intactId="EBI-1053424">
        <id>O43741</id>
        <label>PRKAB2</label>
    </interactant>
    <organismsDiffer>false</organismsDiffer>
    <experiments>3</experiments>
</comment>
<comment type="interaction">
    <interactant intactId="EBI-6422642">
        <id>Q01974</id>
    </interactant>
    <interactant intactId="EBI-12754095">
        <id>P86480</id>
        <label>PRR20D</label>
    </interactant>
    <organismsDiffer>false</organismsDiffer>
    <experiments>3</experiments>
</comment>
<comment type="interaction">
    <interactant intactId="EBI-6422642">
        <id>Q01974</id>
    </interactant>
    <interactant intactId="EBI-18115268">
        <id>Q8N813</id>
        <label>PRR23E</label>
    </interactant>
    <organismsDiffer>false</organismsDiffer>
    <experiments>3</experiments>
</comment>
<comment type="interaction">
    <interactant intactId="EBI-6422642">
        <id>Q01974</id>
    </interactant>
    <interactant intactId="EBI-9087806">
        <id>O95416</id>
        <label>SOX14</label>
    </interactant>
    <organismsDiffer>false</organismsDiffer>
    <experiments>5</experiments>
</comment>
<comment type="interaction">
    <interactant intactId="EBI-6422642">
        <id>Q01974</id>
    </interactant>
    <interactant intactId="EBI-3923644">
        <id>Q6ZVD7</id>
        <label>STOX1</label>
    </interactant>
    <organismsDiffer>false</organismsDiffer>
    <experiments>3</experiments>
</comment>
<comment type="interaction">
    <interactant intactId="EBI-6422642">
        <id>Q01974</id>
    </interactant>
    <interactant intactId="EBI-3939165">
        <id>O43711</id>
        <label>TLX3</label>
    </interactant>
    <organismsDiffer>false</organismsDiffer>
    <experiments>3</experiments>
</comment>
<comment type="interaction">
    <interactant intactId="EBI-6422642">
        <id>Q01974</id>
    </interactant>
    <interactant intactId="EBI-10191303">
        <id>O95231</id>
        <label>VENTX</label>
    </interactant>
    <organismsDiffer>false</organismsDiffer>
    <experiments>3</experiments>
</comment>
<comment type="subcellular location">
    <subcellularLocation>
        <location evidence="1">Cell membrane</location>
        <topology evidence="1">Single-pass type I membrane protein</topology>
    </subcellularLocation>
</comment>
<comment type="developmental stage">
    <text>Expressed at high levels during early embryonic development. The expression levels drop strongly around day 16 and there are only very low levels in adult tissues.</text>
</comment>
<comment type="disease">
    <disease id="DI-00196">
        <name>Brachydactyly B1</name>
        <acronym>BDB1</acronym>
        <description>A form of brachydactyly. Brachydactyly defines a group of inherited malformations characterized by shortening of the digits due to abnormal development of the phalanges and/or the metacarpals. In brachydactyly type B1 the middle phalanges are short but in addition the terminal phalanges are rudimentary or absent. Both fingers and toes are affected. The thumbs and big toes are usually deformed. Symphalangism is also a feature.</description>
        <dbReference type="MIM" id="113000"/>
    </disease>
    <text>The disease is caused by variants affecting the gene represented in this entry.</text>
</comment>
<comment type="disease" evidence="10 11">
    <disease id="DI-02247">
        <name>Robinow syndrome, autosomal recessive 1</name>
        <acronym>RRS1</acronym>
        <description>A recessive form of Robinow syndrome, a disease characterized by short-limb dwarfism, costovertebral segmentation defects and abnormalities of the head, face and external genitalia. The clinical signs are generally far more severe in recessive cases, particularly skeletal abnormalities. All patients with the recessive form suffer from vertebral segmentation abnormalities, resulting in scoliosis and chest deformities. Rib fusions are considered to be characteristic of the autosomal recessive form. Patients can also present brachydactyly, with extensive aplasia/hypoplasia of the phalanges and metacarpals/metatarsals, and brachy-syn-polydactyly of the hands and oligodactyly of the feet.</description>
        <dbReference type="MIM" id="268310"/>
    </disease>
    <text>The disease is caused by variants affecting the gene represented in this entry.</text>
</comment>
<comment type="similarity">
    <text evidence="6">Belongs to the protein kinase superfamily. Tyr protein kinase family. ROR subfamily.</text>
</comment>
<comment type="caution">
    <text evidence="16 17">The catalytic activity of the kinase domain is controversial.</text>
</comment>
<comment type="sequence caution" evidence="20">
    <conflict type="erroneous initiation">
        <sequence resource="EMBL-CDS" id="BAD92391"/>
    </conflict>
</comment>
<comment type="online information" name="Atlas of Genetics and Cytogenetics in Oncology and Haematology">
    <link uri="https://atlasgeneticsoncology.org/gene/43476/ROR2"/>
</comment>
<reference key="1">
    <citation type="journal article" date="1992" name="J. Biol. Chem.">
        <title>A novel family of cell surface receptors with tyrosine kinase-like domain.</title>
        <authorList>
            <person name="Masiakowski P."/>
            <person name="Carroll R.D."/>
        </authorList>
    </citation>
    <scope>NUCLEOTIDE SEQUENCE [MRNA]</scope>
    <scope>VARIANT ALA-245</scope>
</reference>
<reference key="2">
    <citation type="journal article" date="2004" name="Nature">
        <title>DNA sequence and analysis of human chromosome 9.</title>
        <authorList>
            <person name="Humphray S.J."/>
            <person name="Oliver K."/>
            <person name="Hunt A.R."/>
            <person name="Plumb R.W."/>
            <person name="Loveland J.E."/>
            <person name="Howe K.L."/>
            <person name="Andrews T.D."/>
            <person name="Searle S."/>
            <person name="Hunt S.E."/>
            <person name="Scott C.E."/>
            <person name="Jones M.C."/>
            <person name="Ainscough R."/>
            <person name="Almeida J.P."/>
            <person name="Ambrose K.D."/>
            <person name="Ashwell R.I.S."/>
            <person name="Babbage A.K."/>
            <person name="Babbage S."/>
            <person name="Bagguley C.L."/>
            <person name="Bailey J."/>
            <person name="Banerjee R."/>
            <person name="Barker D.J."/>
            <person name="Barlow K.F."/>
            <person name="Bates K."/>
            <person name="Beasley H."/>
            <person name="Beasley O."/>
            <person name="Bird C.P."/>
            <person name="Bray-Allen S."/>
            <person name="Brown A.J."/>
            <person name="Brown J.Y."/>
            <person name="Burford D."/>
            <person name="Burrill W."/>
            <person name="Burton J."/>
            <person name="Carder C."/>
            <person name="Carter N.P."/>
            <person name="Chapman J.C."/>
            <person name="Chen Y."/>
            <person name="Clarke G."/>
            <person name="Clark S.Y."/>
            <person name="Clee C.M."/>
            <person name="Clegg S."/>
            <person name="Collier R.E."/>
            <person name="Corby N."/>
            <person name="Crosier M."/>
            <person name="Cummings A.T."/>
            <person name="Davies J."/>
            <person name="Dhami P."/>
            <person name="Dunn M."/>
            <person name="Dutta I."/>
            <person name="Dyer L.W."/>
            <person name="Earthrowl M.E."/>
            <person name="Faulkner L."/>
            <person name="Fleming C.J."/>
            <person name="Frankish A."/>
            <person name="Frankland J.A."/>
            <person name="French L."/>
            <person name="Fricker D.G."/>
            <person name="Garner P."/>
            <person name="Garnett J."/>
            <person name="Ghori J."/>
            <person name="Gilbert J.G.R."/>
            <person name="Glison C."/>
            <person name="Grafham D.V."/>
            <person name="Gribble S."/>
            <person name="Griffiths C."/>
            <person name="Griffiths-Jones S."/>
            <person name="Grocock R."/>
            <person name="Guy J."/>
            <person name="Hall R.E."/>
            <person name="Hammond S."/>
            <person name="Harley J.L."/>
            <person name="Harrison E.S.I."/>
            <person name="Hart E.A."/>
            <person name="Heath P.D."/>
            <person name="Henderson C.D."/>
            <person name="Hopkins B.L."/>
            <person name="Howard P.J."/>
            <person name="Howden P.J."/>
            <person name="Huckle E."/>
            <person name="Johnson C."/>
            <person name="Johnson D."/>
            <person name="Joy A.A."/>
            <person name="Kay M."/>
            <person name="Keenan S."/>
            <person name="Kershaw J.K."/>
            <person name="Kimberley A.M."/>
            <person name="King A."/>
            <person name="Knights A."/>
            <person name="Laird G.K."/>
            <person name="Langford C."/>
            <person name="Lawlor S."/>
            <person name="Leongamornlert D.A."/>
            <person name="Leversha M."/>
            <person name="Lloyd C."/>
            <person name="Lloyd D.M."/>
            <person name="Lovell J."/>
            <person name="Martin S."/>
            <person name="Mashreghi-Mohammadi M."/>
            <person name="Matthews L."/>
            <person name="McLaren S."/>
            <person name="McLay K.E."/>
            <person name="McMurray A."/>
            <person name="Milne S."/>
            <person name="Nickerson T."/>
            <person name="Nisbett J."/>
            <person name="Nordsiek G."/>
            <person name="Pearce A.V."/>
            <person name="Peck A.I."/>
            <person name="Porter K.M."/>
            <person name="Pandian R."/>
            <person name="Pelan S."/>
            <person name="Phillimore B."/>
            <person name="Povey S."/>
            <person name="Ramsey Y."/>
            <person name="Rand V."/>
            <person name="Scharfe M."/>
            <person name="Sehra H.K."/>
            <person name="Shownkeen R."/>
            <person name="Sims S.K."/>
            <person name="Skuce C.D."/>
            <person name="Smith M."/>
            <person name="Steward C.A."/>
            <person name="Swarbreck D."/>
            <person name="Sycamore N."/>
            <person name="Tester J."/>
            <person name="Thorpe A."/>
            <person name="Tracey A."/>
            <person name="Tromans A."/>
            <person name="Thomas D.W."/>
            <person name="Wall M."/>
            <person name="Wallis J.M."/>
            <person name="West A.P."/>
            <person name="Whitehead S.L."/>
            <person name="Willey D.L."/>
            <person name="Williams S.A."/>
            <person name="Wilming L."/>
            <person name="Wray P.W."/>
            <person name="Young L."/>
            <person name="Ashurst J.L."/>
            <person name="Coulson A."/>
            <person name="Blocker H."/>
            <person name="Durbin R.M."/>
            <person name="Sulston J.E."/>
            <person name="Hubbard T."/>
            <person name="Jackson M.J."/>
            <person name="Bentley D.R."/>
            <person name="Beck S."/>
            <person name="Rogers J."/>
            <person name="Dunham I."/>
        </authorList>
    </citation>
    <scope>NUCLEOTIDE SEQUENCE [LARGE SCALE GENOMIC DNA]</scope>
</reference>
<reference key="3">
    <citation type="submission" date="2005-03" db="EMBL/GenBank/DDBJ databases">
        <authorList>
            <person name="Totoki Y."/>
            <person name="Toyoda A."/>
            <person name="Takeda T."/>
            <person name="Sakaki Y."/>
            <person name="Tanaka A."/>
            <person name="Yokoyama S."/>
            <person name="Ohara O."/>
            <person name="Nagase T."/>
            <person name="Kikuno R.F."/>
        </authorList>
    </citation>
    <scope>NUCLEOTIDE SEQUENCE [LARGE SCALE MRNA] OF 33-943</scope>
    <scope>VARIANTS ALA-245 AND ILE-819</scope>
    <source>
        <tissue>Brain</tissue>
    </source>
</reference>
<reference key="4">
    <citation type="journal article" date="2000" name="Nat. Genet.">
        <title>Dominant mutations in ROR2, encoding an orphan receptor tyrosine kinase, cause brachydactyly type B.</title>
        <authorList>
            <person name="Oldridge M."/>
            <person name="Fortuna A.M."/>
            <person name="Maringa M."/>
            <person name="Propping P."/>
            <person name="Mansour S."/>
            <person name="Pollitt C."/>
            <person name="DeChiara T.M."/>
            <person name="Kimble R.B."/>
            <person name="Valenzuela D.M."/>
            <person name="Yancopoulos G.D."/>
            <person name="Wilkie A.O.M."/>
        </authorList>
    </citation>
    <scope>NUCLEOTIDE SEQUENCE [GENOMIC DNA] OF 34-943</scope>
    <scope>VARIANTS ALA-245 AND ILE-819</scope>
</reference>
<reference key="5">
    <citation type="journal article" date="2000" name="Am. J. Hum. Genet.">
        <title>Distinct mutations in the receptor tyrosine kinase gene ROR2 cause brachydactyly type B.</title>
        <authorList>
            <person name="Schwabe G.C."/>
            <person name="Tinschert S."/>
            <person name="Buschow C."/>
            <person name="Meinecke P."/>
            <person name="Wolff G."/>
            <person name="Gillessen-Kaesbach G."/>
            <person name="Oldridge M."/>
            <person name="Wilkie A.O.M."/>
            <person name="Koemec R."/>
            <person name="Mundlos S."/>
        </authorList>
    </citation>
    <scope>NUCLEOTIDE SEQUENCE [GENOMIC DNA] OF 34-574</scope>
    <scope>VARIANT ALA-245</scope>
</reference>
<reference key="6">
    <citation type="journal article" date="2004" name="Mol. Cell. Proteomics">
        <title>O-sulfonation of serine and threonine: mass spectrometric detection and characterization of a new posttranslational modification in diverse proteins throughout the eukaryotes.</title>
        <authorList>
            <person name="Medzihradszky K.F."/>
            <person name="Darula Z."/>
            <person name="Perlson E."/>
            <person name="Fainzilber M."/>
            <person name="Chalkley R.J."/>
            <person name="Ball H."/>
            <person name="Greenbaum D."/>
            <person name="Bogyo M."/>
            <person name="Tyson D.R."/>
            <person name="Bradshaw R.A."/>
            <person name="Burlingame A.L."/>
        </authorList>
    </citation>
    <scope>PROTEIN SEQUENCE OF 465-474</scope>
    <scope>SULFATION AT SER-469 AND SER-471</scope>
    <scope>IDENTIFICATION BY MASS SPECTROMETRY</scope>
</reference>
<reference key="7">
    <citation type="journal article" date="2007" name="Mol. Endocrinol.">
        <title>Homodimerization of Ror2 tyrosine kinase receptor induces 14-3-3(beta) phosphorylation and promotes osteoblast differentiation and bone formation.</title>
        <authorList>
            <person name="Liu Y."/>
            <person name="Ross J.F."/>
            <person name="Bodine P.V.N."/>
            <person name="Billiard J."/>
        </authorList>
    </citation>
    <scope>FUNCTION</scope>
    <scope>CATALYTIC ACTIVITY</scope>
    <scope>COFACTOR</scope>
    <scope>INTERACTION WITH YWHAB</scope>
    <scope>IDENTIFICATION BY MASS SPECTROMETRY</scope>
</reference>
<reference key="8">
    <citation type="journal article" date="2010" name="Sci. Signal.">
        <title>Quantitative phosphoproteomics reveals widespread full phosphorylation site occupancy during mitosis.</title>
        <authorList>
            <person name="Olsen J.V."/>
            <person name="Vermeulen M."/>
            <person name="Santamaria A."/>
            <person name="Kumar C."/>
            <person name="Miller M.L."/>
            <person name="Jensen L.J."/>
            <person name="Gnad F."/>
            <person name="Cox J."/>
            <person name="Jensen T.S."/>
            <person name="Nigg E.A."/>
            <person name="Brunak S."/>
            <person name="Mann M."/>
        </authorList>
    </citation>
    <scope>IDENTIFICATION BY MASS SPECTROMETRY [LARGE SCALE ANALYSIS]</scope>
    <source>
        <tissue>Cervix carcinoma</tissue>
    </source>
</reference>
<reference key="9">
    <citation type="journal article" date="2014" name="PLoS ONE">
        <title>Evolutionary divergence in the catalytic activity of the CAM-1, ROR1 and ROR2 kinase domains.</title>
        <authorList>
            <person name="Bainbridge T.W."/>
            <person name="DeAlmeida V.I."/>
            <person name="Izrael-Tomasevic A."/>
            <person name="Chalouni C."/>
            <person name="Pan B."/>
            <person name="Goldsmith J."/>
            <person name="Schoen A.P."/>
            <person name="Quinones G.A."/>
            <person name="Kelly R."/>
            <person name="Lill J.R."/>
            <person name="Sandoval W."/>
            <person name="Costa M."/>
            <person name="Polakis P."/>
            <person name="Arnott D."/>
            <person name="Rubinfeld B."/>
            <person name="Ernst J.A."/>
        </authorList>
    </citation>
    <scope>FUNCTION</scope>
    <scope>LACK OF CATALYTIC ACTIVITY</scope>
    <scope>MUTAGENESIS OF ASP-482</scope>
</reference>
<reference key="10">
    <citation type="journal article" date="2015" name="Dis. Model. Mech.">
        <title>The Meckel-Gruber syndrome protein TMEM67 controls basal body positioning and epithelial branching morphogenesis in mice via the non-canonical Wnt pathway.</title>
        <authorList>
            <person name="Abdelhamed Z.A."/>
            <person name="Natarajan S."/>
            <person name="Wheway G."/>
            <person name="Inglehearn C.F."/>
            <person name="Toomes C."/>
            <person name="Johnson C.A."/>
            <person name="Jagger D.J."/>
        </authorList>
    </citation>
    <scope>INTERACTION WITH TMEM67</scope>
</reference>
<reference key="11">
    <citation type="journal article" date="2000" name="Nat. Genet.">
        <title>Recessive Robinow syndrome, allelic to dominant brachydactyly type B, is caused by mutation of ROR2.</title>
        <authorList>
            <person name="Afzal A.R."/>
            <person name="Rajab A."/>
            <person name="Fenske C.D."/>
            <person name="Oldridge M."/>
            <person name="Elanko N."/>
            <person name="Ternes-Pereira E."/>
            <person name="Tueysuez B."/>
            <person name="Murday V.A."/>
            <person name="Patton M.A."/>
            <person name="Wilkie A.O.M."/>
            <person name="Jeffery S."/>
        </authorList>
    </citation>
    <scope>VARIANTS RRS1 CYS-184; TRP-189; TRP-366 AND LYS-620</scope>
</reference>
<reference key="12">
    <citation type="journal article" date="2000" name="Nat. Genet.">
        <title>Mutation of the gene encoding the ROR2 tyrosine kinase causes autosomal recessive Robinow syndrome.</title>
        <authorList>
            <person name="van Bokhoven H."/>
            <person name="Celli J."/>
            <person name="Kayserili H."/>
            <person name="van Beusekom E."/>
            <person name="Balci S."/>
            <person name="Brussel W."/>
            <person name="Skovby F."/>
            <person name="Kerr B."/>
            <person name="Percin E.F."/>
            <person name="Akarsu N."/>
            <person name="Brunner H.G."/>
        </authorList>
    </citation>
    <scope>VARIANT RRS1 TYR-182</scope>
</reference>
<reference key="13">
    <citation type="journal article" date="2000" name="Nat. Genet.">
        <authorList>
            <person name="van Bokhoven H."/>
            <person name="Celli J."/>
            <person name="Kayserili H."/>
            <person name="van Beusekom E."/>
            <person name="Balci S."/>
            <person name="Brussel W."/>
            <person name="Skovby F."/>
            <person name="Kerr B."/>
            <person name="Percin E.F."/>
            <person name="Akarsu N."/>
            <person name="Brunner H.G."/>
        </authorList>
    </citation>
    <scope>ERRATUM OF PUBMED:10932187</scope>
</reference>
<reference key="14">
    <citation type="journal article" date="2007" name="Nature">
        <title>Patterns of somatic mutation in human cancer genomes.</title>
        <authorList>
            <person name="Greenman C."/>
            <person name="Stephens P."/>
            <person name="Smith R."/>
            <person name="Dalgliesh G.L."/>
            <person name="Hunter C."/>
            <person name="Bignell G."/>
            <person name="Davies H."/>
            <person name="Teague J."/>
            <person name="Butler A."/>
            <person name="Stevens C."/>
            <person name="Edkins S."/>
            <person name="O'Meara S."/>
            <person name="Vastrik I."/>
            <person name="Schmidt E.E."/>
            <person name="Avis T."/>
            <person name="Barthorpe S."/>
            <person name="Bhamra G."/>
            <person name="Buck G."/>
            <person name="Choudhury B."/>
            <person name="Clements J."/>
            <person name="Cole J."/>
            <person name="Dicks E."/>
            <person name="Forbes S."/>
            <person name="Gray K."/>
            <person name="Halliday K."/>
            <person name="Harrison R."/>
            <person name="Hills K."/>
            <person name="Hinton J."/>
            <person name="Jenkinson A."/>
            <person name="Jones D."/>
            <person name="Menzies A."/>
            <person name="Mironenko T."/>
            <person name="Perry J."/>
            <person name="Raine K."/>
            <person name="Richardson D."/>
            <person name="Shepherd R."/>
            <person name="Small A."/>
            <person name="Tofts C."/>
            <person name="Varian J."/>
            <person name="Webb T."/>
            <person name="West S."/>
            <person name="Widaa S."/>
            <person name="Yates A."/>
            <person name="Cahill D.P."/>
            <person name="Louis D.N."/>
            <person name="Goldstraw P."/>
            <person name="Nicholson A.G."/>
            <person name="Brasseur F."/>
            <person name="Looijenga L."/>
            <person name="Weber B.L."/>
            <person name="Chiew Y.-E."/>
            <person name="DeFazio A."/>
            <person name="Greaves M.F."/>
            <person name="Green A.R."/>
            <person name="Campbell P."/>
            <person name="Birney E."/>
            <person name="Easton D.F."/>
            <person name="Chenevix-Trench G."/>
            <person name="Tan M.-H."/>
            <person name="Khoo S.K."/>
            <person name="Teh B.T."/>
            <person name="Yuen S.T."/>
            <person name="Leung S.Y."/>
            <person name="Wooster R."/>
            <person name="Futreal P.A."/>
            <person name="Stratton M.R."/>
        </authorList>
    </citation>
    <scope>VARIANTS [LARGE SCALE ANALYSIS] GLN-244; ALA-245; ASP-349; ALA-490; GLN-530; MET-542; SER-548; LEU-557; ASN-644; ASN-672; ARG-695; CYS-738; LEU-762; ILE-819 AND GLU-935</scope>
</reference>
<name>ROR2_HUMAN</name>
<evidence type="ECO:0000250" key="1"/>
<evidence type="ECO:0000250" key="2">
    <source>
        <dbReference type="UniProtKB" id="Q9Z138"/>
    </source>
</evidence>
<evidence type="ECO:0000255" key="3"/>
<evidence type="ECO:0000255" key="4">
    <source>
        <dbReference type="PROSITE-ProRule" id="PRU00090"/>
    </source>
</evidence>
<evidence type="ECO:0000255" key="5">
    <source>
        <dbReference type="PROSITE-ProRule" id="PRU00121"/>
    </source>
</evidence>
<evidence type="ECO:0000255" key="6">
    <source>
        <dbReference type="PROSITE-ProRule" id="PRU00159"/>
    </source>
</evidence>
<evidence type="ECO:0000255" key="7">
    <source>
        <dbReference type="PROSITE-ProRule" id="PRU10028"/>
    </source>
</evidence>
<evidence type="ECO:0000256" key="8">
    <source>
        <dbReference type="SAM" id="MobiDB-lite"/>
    </source>
</evidence>
<evidence type="ECO:0000269" key="9">
    <source>
    </source>
</evidence>
<evidence type="ECO:0000269" key="10">
    <source>
    </source>
</evidence>
<evidence type="ECO:0000269" key="11">
    <source>
    </source>
</evidence>
<evidence type="ECO:0000269" key="12">
    <source>
    </source>
</evidence>
<evidence type="ECO:0000269" key="13">
    <source>
    </source>
</evidence>
<evidence type="ECO:0000269" key="14">
    <source>
    </source>
</evidence>
<evidence type="ECO:0000269" key="15">
    <source>
    </source>
</evidence>
<evidence type="ECO:0000269" key="16">
    <source>
    </source>
</evidence>
<evidence type="ECO:0000269" key="17">
    <source>
    </source>
</evidence>
<evidence type="ECO:0000269" key="18">
    <source>
    </source>
</evidence>
<evidence type="ECO:0000269" key="19">
    <source ref="3"/>
</evidence>
<evidence type="ECO:0000305" key="20"/>
<evidence type="ECO:0007829" key="21">
    <source>
        <dbReference type="PDB" id="4GT4"/>
    </source>
</evidence>
<evidence type="ECO:0007829" key="22">
    <source>
        <dbReference type="PDB" id="6OSN"/>
    </source>
</evidence>
<evidence type="ECO:0007829" key="23">
    <source>
        <dbReference type="PDB" id="9FSE"/>
    </source>
</evidence>
<organism>
    <name type="scientific">Homo sapiens</name>
    <name type="common">Human</name>
    <dbReference type="NCBI Taxonomy" id="9606"/>
    <lineage>
        <taxon>Eukaryota</taxon>
        <taxon>Metazoa</taxon>
        <taxon>Chordata</taxon>
        <taxon>Craniata</taxon>
        <taxon>Vertebrata</taxon>
        <taxon>Euteleostomi</taxon>
        <taxon>Mammalia</taxon>
        <taxon>Eutheria</taxon>
        <taxon>Euarchontoglires</taxon>
        <taxon>Primates</taxon>
        <taxon>Haplorrhini</taxon>
        <taxon>Catarrhini</taxon>
        <taxon>Hominidae</taxon>
        <taxon>Homo</taxon>
    </lineage>
</organism>
<sequence>MARGSALPRRPLLCIPAVWAAAALLLSVSRTSGEVEVLDPNDPLGPLDGQDGPIPTLKGYFLNFLEPVNNITIVQGQTAILHCKVAGNPPPNVRWLKNDAPVVQEPRRIIIRKTEYGSRLRIQDLDTTDTGYYQCVATNGMKTITATGVLFVRLGPTHSPNHNFQDDYHEDGFCQPYRGIACARFIGNRTIYVDSLQMQGEIENRITAAFTMIGTSTHLSDQCSQFAIPSFCHFVFPLCDARSRTPKPRELCRDECEVLESDLCRQEYTIARSNPLILMRLQLPKCEALPMPESPDAANCMRIGIPAERLGRYHQCYNGSGMDYRGTASTTKSGHQCQPWALQHPHSHHLSSTDFPELGGGHAYCRNPGGQMEGPWCFTQNKNVRMELCDVPSCSPRDSSKMGILYILVPSIAIPLVIACLFFLVCMCRNKQKASASTPQRRQLMASPSQDMEMPLINQHKQAKLKEISLSAVRFMEELGEDRFGKVYKGHLFGPAPGEQTQAVAIKTLKDKAEGPLREEFRHEAMLRARLQHPNVVCLLGVVTKDQPLSMIFSYCSHGDLHEFLVMRSPHSDVGSTDDDRTVKSALEPPDFVHLVAQIAAGMEYLSSHHVVHKDLATRNVLVYDKLNVKISDLGLFREVYAADYYKLLGNSLLPIRWMAPEAIMYGKFSIDSDIWSYGVVLWEVFSYGLQPYCGYSNQDVVEMIRNRQVLPCPDDCPAWVYALMIECWNEFPSRRPRFKDIHSRLRAWGNLSNYNSSAQTSGASNTTQTSSLSTSPVSNVSNARYVGPKQKAPPFPQPQFIPMKGQIRPMVPPPQLYVPVNGYQPVPAYGAYLPNFYPVQIPMQMAPQQVPPQMVPKPSSHHSGSGSTSTGYVTTAPSNTSMADRAALLSEGADDTQNAPEDGAQSTVQEAEEEEEGSVPETELLGDCDTLQVDEAQVQLEA</sequence>
<dbReference type="EC" id="2.7.10.1" evidence="16"/>
<dbReference type="EMBL" id="M97639">
    <property type="protein sequence ID" value="AAA60276.1"/>
    <property type="molecule type" value="mRNA"/>
</dbReference>
<dbReference type="EMBL" id="AL391219">
    <property type="status" value="NOT_ANNOTATED_CDS"/>
    <property type="molecule type" value="Genomic_DNA"/>
</dbReference>
<dbReference type="EMBL" id="AL928802">
    <property type="status" value="NOT_ANNOTATED_CDS"/>
    <property type="molecule type" value="Genomic_DNA"/>
</dbReference>
<dbReference type="EMBL" id="AL583841">
    <property type="status" value="NOT_ANNOTATED_CDS"/>
    <property type="molecule type" value="Genomic_DNA"/>
</dbReference>
<dbReference type="EMBL" id="AB209154">
    <property type="protein sequence ID" value="BAD92391.1"/>
    <property type="status" value="ALT_INIT"/>
    <property type="molecule type" value="mRNA"/>
</dbReference>
<dbReference type="EMBL" id="AH009681">
    <property type="protein sequence ID" value="AAG01184.2"/>
    <property type="molecule type" value="Genomic_DNA"/>
</dbReference>
<dbReference type="EMBL" id="AH010002">
    <property type="protein sequence ID" value="AAG33132.1"/>
    <property type="molecule type" value="Genomic_DNA"/>
</dbReference>
<dbReference type="CCDS" id="CCDS6691.1"/>
<dbReference type="PIR" id="B45082">
    <property type="entry name" value="B45082"/>
</dbReference>
<dbReference type="RefSeq" id="NP_001305133.1">
    <property type="nucleotide sequence ID" value="NM_001318204.1"/>
</dbReference>
<dbReference type="RefSeq" id="NP_004551.2">
    <property type="nucleotide sequence ID" value="NM_004560.3"/>
</dbReference>
<dbReference type="PDB" id="3ZZW">
    <property type="method" value="X-ray"/>
    <property type="resolution" value="2.90 A"/>
    <property type="chains" value="A/B=464-751"/>
</dbReference>
<dbReference type="PDB" id="4GT4">
    <property type="method" value="X-ray"/>
    <property type="resolution" value="2.41 A"/>
    <property type="chains" value="A/B=452-753"/>
</dbReference>
<dbReference type="PDB" id="6OSH">
    <property type="method" value="X-ray"/>
    <property type="resolution" value="1.12 A"/>
    <property type="chains" value="K=314-394"/>
</dbReference>
<dbReference type="PDB" id="6OSN">
    <property type="method" value="X-ray"/>
    <property type="resolution" value="1.08 A"/>
    <property type="chains" value="A=314-394"/>
</dbReference>
<dbReference type="PDB" id="6OSV">
    <property type="method" value="X-ray"/>
    <property type="resolution" value="1.34 A"/>
    <property type="chains" value="K=314-394"/>
</dbReference>
<dbReference type="PDB" id="9FSE">
    <property type="method" value="X-ray"/>
    <property type="resolution" value="2.48 A"/>
    <property type="chains" value="A=171-396"/>
</dbReference>
<dbReference type="PDBsum" id="3ZZW"/>
<dbReference type="PDBsum" id="4GT4"/>
<dbReference type="PDBsum" id="6OSH"/>
<dbReference type="PDBsum" id="6OSN"/>
<dbReference type="PDBsum" id="6OSV"/>
<dbReference type="PDBsum" id="9FSE"/>
<dbReference type="SMR" id="Q01974"/>
<dbReference type="BioGRID" id="110974">
    <property type="interactions" value="389"/>
</dbReference>
<dbReference type="FunCoup" id="Q01974">
    <property type="interactions" value="360"/>
</dbReference>
<dbReference type="IntAct" id="Q01974">
    <property type="interactions" value="244"/>
</dbReference>
<dbReference type="MINT" id="Q01974"/>
<dbReference type="STRING" id="9606.ENSP00000364860"/>
<dbReference type="BindingDB" id="Q01974"/>
<dbReference type="ChEMBL" id="CHEMBL2375201"/>
<dbReference type="GlyCosmos" id="Q01974">
    <property type="glycosylation" value="4 sites, 1 glycan"/>
</dbReference>
<dbReference type="GlyGen" id="Q01974">
    <property type="glycosylation" value="6 sites, 4 N-linked glycans (3 sites), 3 O-linked glycans (2 sites)"/>
</dbReference>
<dbReference type="iPTMnet" id="Q01974"/>
<dbReference type="PhosphoSitePlus" id="Q01974"/>
<dbReference type="SwissPalm" id="Q01974"/>
<dbReference type="BioMuta" id="ROR2"/>
<dbReference type="DMDM" id="90110767"/>
<dbReference type="CPTAC" id="CPTAC-2781"/>
<dbReference type="jPOST" id="Q01974"/>
<dbReference type="MassIVE" id="Q01974"/>
<dbReference type="PaxDb" id="9606-ENSP00000364860"/>
<dbReference type="PeptideAtlas" id="Q01974"/>
<dbReference type="ProteomicsDB" id="58028"/>
<dbReference type="Pumba" id="Q01974"/>
<dbReference type="ABCD" id="Q01974">
    <property type="antibodies" value="6 sequenced antibodies"/>
</dbReference>
<dbReference type="Antibodypedia" id="13579">
    <property type="antibodies" value="771 antibodies from 40 providers"/>
</dbReference>
<dbReference type="DNASU" id="4920"/>
<dbReference type="Ensembl" id="ENST00000375708.4">
    <property type="protein sequence ID" value="ENSP00000364860.3"/>
    <property type="gene ID" value="ENSG00000169071.15"/>
</dbReference>
<dbReference type="GeneID" id="4920"/>
<dbReference type="KEGG" id="hsa:4920"/>
<dbReference type="MANE-Select" id="ENST00000375708.4">
    <property type="protein sequence ID" value="ENSP00000364860.3"/>
    <property type="RefSeq nucleotide sequence ID" value="NM_004560.4"/>
    <property type="RefSeq protein sequence ID" value="NP_004551.2"/>
</dbReference>
<dbReference type="UCSC" id="uc004arj.3">
    <property type="organism name" value="human"/>
</dbReference>
<dbReference type="AGR" id="HGNC:10257"/>
<dbReference type="CTD" id="4920"/>
<dbReference type="DisGeNET" id="4920"/>
<dbReference type="GeneCards" id="ROR2"/>
<dbReference type="GeneReviews" id="ROR2"/>
<dbReference type="HGNC" id="HGNC:10257">
    <property type="gene designation" value="ROR2"/>
</dbReference>
<dbReference type="HPA" id="ENSG00000169071">
    <property type="expression patterns" value="Low tissue specificity"/>
</dbReference>
<dbReference type="MalaCards" id="ROR2"/>
<dbReference type="MIM" id="113000">
    <property type="type" value="phenotype"/>
</dbReference>
<dbReference type="MIM" id="268310">
    <property type="type" value="phenotype"/>
</dbReference>
<dbReference type="MIM" id="602337">
    <property type="type" value="gene"/>
</dbReference>
<dbReference type="neXtProt" id="NX_Q01974"/>
<dbReference type="OpenTargets" id="ENSG00000169071"/>
<dbReference type="Orphanet" id="1507">
    <property type="disease" value="Autosomal recessive Robinow syndrome"/>
</dbReference>
<dbReference type="Orphanet" id="572385">
    <property type="disease" value="Brachydactyly type B1"/>
</dbReference>
<dbReference type="PharmGKB" id="PA34629"/>
<dbReference type="VEuPathDB" id="HostDB:ENSG00000169071"/>
<dbReference type="eggNOG" id="KOG1026">
    <property type="taxonomic scope" value="Eukaryota"/>
</dbReference>
<dbReference type="GeneTree" id="ENSGT00940000153947"/>
<dbReference type="HOGENOM" id="CLU_000288_30_4_1"/>
<dbReference type="InParanoid" id="Q01974"/>
<dbReference type="OMA" id="MAPQMIP"/>
<dbReference type="OrthoDB" id="2431000at2759"/>
<dbReference type="PAN-GO" id="Q01974">
    <property type="GO annotations" value="9 GO annotations based on evolutionary models"/>
</dbReference>
<dbReference type="PhylomeDB" id="Q01974"/>
<dbReference type="TreeFam" id="TF106465"/>
<dbReference type="BRENDA" id="2.7.10.1">
    <property type="organism ID" value="2681"/>
</dbReference>
<dbReference type="PathwayCommons" id="Q01974"/>
<dbReference type="Reactome" id="R-HSA-4086400">
    <property type="pathway name" value="PCP/CE pathway"/>
</dbReference>
<dbReference type="Reactome" id="R-HSA-5140745">
    <property type="pathway name" value="WNT5A-dependent internalization of FZD2, FZD5 and ROR2"/>
</dbReference>
<dbReference type="SignaLink" id="Q01974"/>
<dbReference type="SIGNOR" id="Q01974"/>
<dbReference type="BioGRID-ORCS" id="4920">
    <property type="hits" value="9 hits in 1192 CRISPR screens"/>
</dbReference>
<dbReference type="ChiTaRS" id="ROR2">
    <property type="organism name" value="human"/>
</dbReference>
<dbReference type="EvolutionaryTrace" id="Q01974"/>
<dbReference type="GeneWiki" id="ROR2"/>
<dbReference type="GenomeRNAi" id="4920"/>
<dbReference type="Pharos" id="Q01974">
    <property type="development level" value="Tbio"/>
</dbReference>
<dbReference type="PRO" id="PR:Q01974"/>
<dbReference type="Proteomes" id="UP000005640">
    <property type="component" value="Chromosome 9"/>
</dbReference>
<dbReference type="RNAct" id="Q01974">
    <property type="molecule type" value="protein"/>
</dbReference>
<dbReference type="Bgee" id="ENSG00000169071">
    <property type="expression patterns" value="Expressed in muscle layer of sigmoid colon and 125 other cell types or tissues"/>
</dbReference>
<dbReference type="ExpressionAtlas" id="Q01974">
    <property type="expression patterns" value="baseline and differential"/>
</dbReference>
<dbReference type="GO" id="GO:0030424">
    <property type="term" value="C:axon"/>
    <property type="evidence" value="ECO:0000318"/>
    <property type="project" value="GO_Central"/>
</dbReference>
<dbReference type="GO" id="GO:0030669">
    <property type="term" value="C:clathrin-coated endocytic vesicle membrane"/>
    <property type="evidence" value="ECO:0000304"/>
    <property type="project" value="Reactome"/>
</dbReference>
<dbReference type="GO" id="GO:0005886">
    <property type="term" value="C:plasma membrane"/>
    <property type="evidence" value="ECO:0000318"/>
    <property type="project" value="GO_Central"/>
</dbReference>
<dbReference type="GO" id="GO:0043235">
    <property type="term" value="C:receptor complex"/>
    <property type="evidence" value="ECO:0000318"/>
    <property type="project" value="GO_Central"/>
</dbReference>
<dbReference type="GO" id="GO:0005524">
    <property type="term" value="F:ATP binding"/>
    <property type="evidence" value="ECO:0007669"/>
    <property type="project" value="UniProtKB-KW"/>
</dbReference>
<dbReference type="GO" id="GO:0015026">
    <property type="term" value="F:coreceptor activity"/>
    <property type="evidence" value="ECO:0000304"/>
    <property type="project" value="ParkinsonsUK-UCL"/>
</dbReference>
<dbReference type="GO" id="GO:0046872">
    <property type="term" value="F:metal ion binding"/>
    <property type="evidence" value="ECO:0007669"/>
    <property type="project" value="UniProtKB-KW"/>
</dbReference>
<dbReference type="GO" id="GO:0031435">
    <property type="term" value="F:mitogen-activated protein kinase kinase kinase binding"/>
    <property type="evidence" value="ECO:0000353"/>
    <property type="project" value="WormBase"/>
</dbReference>
<dbReference type="GO" id="GO:0004714">
    <property type="term" value="F:transmembrane receptor protein tyrosine kinase activity"/>
    <property type="evidence" value="ECO:0000318"/>
    <property type="project" value="GO_Central"/>
</dbReference>
<dbReference type="GO" id="GO:0017147">
    <property type="term" value="F:Wnt-protein binding"/>
    <property type="evidence" value="ECO:0000353"/>
    <property type="project" value="UniProtKB"/>
</dbReference>
<dbReference type="GO" id="GO:0007169">
    <property type="term" value="P:cell surface receptor protein tyrosine kinase signaling pathway"/>
    <property type="evidence" value="ECO:0000318"/>
    <property type="project" value="GO_Central"/>
</dbReference>
<dbReference type="GO" id="GO:0030335">
    <property type="term" value="P:positive regulation of cell migration"/>
    <property type="evidence" value="ECO:0000314"/>
    <property type="project" value="UniProtKB"/>
</dbReference>
<dbReference type="GO" id="GO:0007165">
    <property type="term" value="P:signal transduction"/>
    <property type="evidence" value="ECO:0000315"/>
    <property type="project" value="UniProtKB"/>
</dbReference>
<dbReference type="GO" id="GO:0016055">
    <property type="term" value="P:Wnt signaling pathway"/>
    <property type="evidence" value="ECO:0007669"/>
    <property type="project" value="UniProtKB-KW"/>
</dbReference>
<dbReference type="CDD" id="cd07468">
    <property type="entry name" value="CRD_TK_ROR2"/>
    <property type="match status" value="1"/>
</dbReference>
<dbReference type="CDD" id="cd00108">
    <property type="entry name" value="KR"/>
    <property type="match status" value="1"/>
</dbReference>
<dbReference type="CDD" id="cd05091">
    <property type="entry name" value="PTKc_Ror2"/>
    <property type="match status" value="1"/>
</dbReference>
<dbReference type="FunFam" id="1.10.2000.10:FF:000002">
    <property type="entry name" value="Inactive tyrosine-protein kinase transmembrane receptor ROR1"/>
    <property type="match status" value="1"/>
</dbReference>
<dbReference type="FunFam" id="2.40.20.10:FF:000003">
    <property type="entry name" value="Inactive tyrosine-protein kinase transmembrane receptor ROR1"/>
    <property type="match status" value="1"/>
</dbReference>
<dbReference type="FunFam" id="2.60.40.10:FF:000242">
    <property type="entry name" value="Inactive tyrosine-protein kinase transmembrane receptor ROR1"/>
    <property type="match status" value="1"/>
</dbReference>
<dbReference type="FunFam" id="1.10.510.10:FF:000116">
    <property type="entry name" value="inactive tyrosine-protein kinase transmembrane receptor ROR1"/>
    <property type="match status" value="1"/>
</dbReference>
<dbReference type="FunFam" id="3.30.200.20:FF:000139">
    <property type="entry name" value="inactive tyrosine-protein kinase transmembrane receptor ROR1"/>
    <property type="match status" value="1"/>
</dbReference>
<dbReference type="Gene3D" id="1.10.2000.10">
    <property type="entry name" value="Frizzled cysteine-rich domain"/>
    <property type="match status" value="1"/>
</dbReference>
<dbReference type="Gene3D" id="2.60.40.10">
    <property type="entry name" value="Immunoglobulins"/>
    <property type="match status" value="1"/>
</dbReference>
<dbReference type="Gene3D" id="3.30.200.20">
    <property type="entry name" value="Phosphorylase Kinase, domain 1"/>
    <property type="match status" value="1"/>
</dbReference>
<dbReference type="Gene3D" id="2.40.20.10">
    <property type="entry name" value="Plasminogen Kringle 4"/>
    <property type="match status" value="1"/>
</dbReference>
<dbReference type="Gene3D" id="1.10.510.10">
    <property type="entry name" value="Transferase(Phosphotransferase) domain 1"/>
    <property type="match status" value="1"/>
</dbReference>
<dbReference type="IDEAL" id="IID00560"/>
<dbReference type="InterPro" id="IPR020067">
    <property type="entry name" value="Frizzled_dom"/>
</dbReference>
<dbReference type="InterPro" id="IPR036790">
    <property type="entry name" value="Frizzled_dom_sf"/>
</dbReference>
<dbReference type="InterPro" id="IPR007110">
    <property type="entry name" value="Ig-like_dom"/>
</dbReference>
<dbReference type="InterPro" id="IPR036179">
    <property type="entry name" value="Ig-like_dom_sf"/>
</dbReference>
<dbReference type="InterPro" id="IPR013783">
    <property type="entry name" value="Ig-like_fold"/>
</dbReference>
<dbReference type="InterPro" id="IPR013098">
    <property type="entry name" value="Ig_I-set"/>
</dbReference>
<dbReference type="InterPro" id="IPR003599">
    <property type="entry name" value="Ig_sub"/>
</dbReference>
<dbReference type="InterPro" id="IPR003598">
    <property type="entry name" value="Ig_sub2"/>
</dbReference>
<dbReference type="InterPro" id="IPR011009">
    <property type="entry name" value="Kinase-like_dom_sf"/>
</dbReference>
<dbReference type="InterPro" id="IPR000001">
    <property type="entry name" value="Kringle"/>
</dbReference>
<dbReference type="InterPro" id="IPR013806">
    <property type="entry name" value="Kringle-like"/>
</dbReference>
<dbReference type="InterPro" id="IPR018056">
    <property type="entry name" value="Kringle_CS"/>
</dbReference>
<dbReference type="InterPro" id="IPR038178">
    <property type="entry name" value="Kringle_sf"/>
</dbReference>
<dbReference type="InterPro" id="IPR000719">
    <property type="entry name" value="Prot_kinase_dom"/>
</dbReference>
<dbReference type="InterPro" id="IPR050122">
    <property type="entry name" value="RTK"/>
</dbReference>
<dbReference type="InterPro" id="IPR001245">
    <property type="entry name" value="Ser-Thr/Tyr_kinase_cat_dom"/>
</dbReference>
<dbReference type="InterPro" id="IPR008266">
    <property type="entry name" value="Tyr_kinase_AS"/>
</dbReference>
<dbReference type="InterPro" id="IPR016247">
    <property type="entry name" value="Tyr_kinase_rcpt_ROR"/>
</dbReference>
<dbReference type="PANTHER" id="PTHR24416">
    <property type="entry name" value="TYROSINE-PROTEIN KINASE RECEPTOR"/>
    <property type="match status" value="1"/>
</dbReference>
<dbReference type="PANTHER" id="PTHR24416:SF132">
    <property type="entry name" value="TYROSINE-PROTEIN KINASE TRANSMEMBRANE RECEPTOR ROR2"/>
    <property type="match status" value="1"/>
</dbReference>
<dbReference type="Pfam" id="PF01392">
    <property type="entry name" value="Fz"/>
    <property type="match status" value="1"/>
</dbReference>
<dbReference type="Pfam" id="PF07679">
    <property type="entry name" value="I-set"/>
    <property type="match status" value="1"/>
</dbReference>
<dbReference type="Pfam" id="PF00051">
    <property type="entry name" value="Kringle"/>
    <property type="match status" value="1"/>
</dbReference>
<dbReference type="Pfam" id="PF07714">
    <property type="entry name" value="PK_Tyr_Ser-Thr"/>
    <property type="match status" value="1"/>
</dbReference>
<dbReference type="PIRSF" id="PIRSF000624">
    <property type="entry name" value="TyrPK_TMrec_ROR"/>
    <property type="match status" value="1"/>
</dbReference>
<dbReference type="PRINTS" id="PR00018">
    <property type="entry name" value="KRINGLE"/>
</dbReference>
<dbReference type="PRINTS" id="PR00109">
    <property type="entry name" value="TYRKINASE"/>
</dbReference>
<dbReference type="SMART" id="SM00409">
    <property type="entry name" value="IG"/>
    <property type="match status" value="1"/>
</dbReference>
<dbReference type="SMART" id="SM00408">
    <property type="entry name" value="IGc2"/>
    <property type="match status" value="1"/>
</dbReference>
<dbReference type="SMART" id="SM00130">
    <property type="entry name" value="KR"/>
    <property type="match status" value="1"/>
</dbReference>
<dbReference type="SUPFAM" id="SSF48726">
    <property type="entry name" value="Immunoglobulin"/>
    <property type="match status" value="1"/>
</dbReference>
<dbReference type="SUPFAM" id="SSF57440">
    <property type="entry name" value="Kringle-like"/>
    <property type="match status" value="1"/>
</dbReference>
<dbReference type="SUPFAM" id="SSF56112">
    <property type="entry name" value="Protein kinase-like (PK-like)"/>
    <property type="match status" value="1"/>
</dbReference>
<dbReference type="PROSITE" id="PS50038">
    <property type="entry name" value="FZ"/>
    <property type="match status" value="1"/>
</dbReference>
<dbReference type="PROSITE" id="PS50835">
    <property type="entry name" value="IG_LIKE"/>
    <property type="match status" value="1"/>
</dbReference>
<dbReference type="PROSITE" id="PS00021">
    <property type="entry name" value="KRINGLE_1"/>
    <property type="match status" value="1"/>
</dbReference>
<dbReference type="PROSITE" id="PS50070">
    <property type="entry name" value="KRINGLE_2"/>
    <property type="match status" value="1"/>
</dbReference>
<dbReference type="PROSITE" id="PS50011">
    <property type="entry name" value="PROTEIN_KINASE_DOM"/>
    <property type="match status" value="1"/>
</dbReference>
<dbReference type="PROSITE" id="PS00109">
    <property type="entry name" value="PROTEIN_KINASE_TYR"/>
    <property type="match status" value="1"/>
</dbReference>
<feature type="signal peptide" evidence="3">
    <location>
        <begin position="1"/>
        <end position="33"/>
    </location>
</feature>
<feature type="chain" id="PRO_0000024460" description="Tyrosine-protein kinase transmembrane receptor ROR2">
    <location>
        <begin position="34"/>
        <end position="943"/>
    </location>
</feature>
<feature type="topological domain" description="Extracellular" evidence="3">
    <location>
        <begin position="34"/>
        <end position="403"/>
    </location>
</feature>
<feature type="transmembrane region" description="Helical" evidence="3">
    <location>
        <begin position="404"/>
        <end position="424"/>
    </location>
</feature>
<feature type="topological domain" description="Cytoplasmic" evidence="3">
    <location>
        <begin position="425"/>
        <end position="943"/>
    </location>
</feature>
<feature type="domain" description="Ig-like C2-type">
    <location>
        <begin position="55"/>
        <end position="145"/>
    </location>
</feature>
<feature type="domain" description="FZ" evidence="4">
    <location>
        <begin position="169"/>
        <end position="303"/>
    </location>
</feature>
<feature type="domain" description="Kringle" evidence="5">
    <location>
        <begin position="316"/>
        <end position="394"/>
    </location>
</feature>
<feature type="domain" description="Protein kinase" evidence="6">
    <location>
        <begin position="473"/>
        <end position="746"/>
    </location>
</feature>
<feature type="region of interest" description="Disordered" evidence="8">
    <location>
        <begin position="757"/>
        <end position="796"/>
    </location>
</feature>
<feature type="region of interest" description="Disordered" evidence="8">
    <location>
        <begin position="850"/>
        <end position="931"/>
    </location>
</feature>
<feature type="compositionally biased region" description="Low complexity" evidence="8">
    <location>
        <begin position="765"/>
        <end position="791"/>
    </location>
</feature>
<feature type="compositionally biased region" description="Low complexity" evidence="8">
    <location>
        <begin position="857"/>
        <end position="872"/>
    </location>
</feature>
<feature type="compositionally biased region" description="Polar residues" evidence="8">
    <location>
        <begin position="873"/>
        <end position="883"/>
    </location>
</feature>
<feature type="active site" description="Proton acceptor" evidence="6 7">
    <location>
        <position position="615"/>
    </location>
</feature>
<feature type="binding site" evidence="6">
    <location>
        <begin position="479"/>
        <end position="487"/>
    </location>
    <ligand>
        <name>ATP</name>
        <dbReference type="ChEBI" id="CHEBI:30616"/>
    </ligand>
</feature>
<feature type="binding site" evidence="6">
    <location>
        <position position="507"/>
    </location>
    <ligand>
        <name>ATP</name>
        <dbReference type="ChEBI" id="CHEBI:30616"/>
    </ligand>
</feature>
<feature type="modified residue" description="Sulfoserine; partial" evidence="14">
    <location>
        <position position="469"/>
    </location>
</feature>
<feature type="modified residue" description="Sulfoserine; partial" evidence="14">
    <location>
        <position position="471"/>
    </location>
</feature>
<feature type="modified residue" description="Phosphotyrosine; by autocatalysis" evidence="1">
    <location>
        <position position="646"/>
    </location>
</feature>
<feature type="modified residue" description="Asymmetric dimethylarginine" evidence="2">
    <location>
        <position position="785"/>
    </location>
</feature>
<feature type="glycosylation site" description="N-linked (GlcNAc...) asparagine" evidence="3">
    <location>
        <position position="70"/>
    </location>
</feature>
<feature type="glycosylation site" description="N-linked (GlcNAc...) asparagine" evidence="3">
    <location>
        <position position="188"/>
    </location>
</feature>
<feature type="glycosylation site" description="N-linked (GlcNAc...) asparagine" evidence="3">
    <location>
        <position position="318"/>
    </location>
</feature>
<feature type="disulfide bond" evidence="1">
    <location>
        <begin position="83"/>
        <end position="135"/>
    </location>
</feature>
<feature type="disulfide bond" evidence="1">
    <location>
        <begin position="174"/>
        <end position="239"/>
    </location>
</feature>
<feature type="disulfide bond" evidence="1">
    <location>
        <begin position="182"/>
        <end position="232"/>
    </location>
</feature>
<feature type="disulfide bond" evidence="1">
    <location>
        <begin position="223"/>
        <end position="264"/>
    </location>
</feature>
<feature type="disulfide bond" evidence="1">
    <location>
        <begin position="252"/>
        <end position="300"/>
    </location>
</feature>
<feature type="disulfide bond" evidence="1">
    <location>
        <begin position="256"/>
        <end position="286"/>
    </location>
</feature>
<feature type="disulfide bond" evidence="1">
    <location>
        <begin position="316"/>
        <end position="394"/>
    </location>
</feature>
<feature type="disulfide bond" evidence="1">
    <location>
        <begin position="337"/>
        <end position="377"/>
    </location>
</feature>
<feature type="disulfide bond" evidence="1">
    <location>
        <begin position="365"/>
        <end position="389"/>
    </location>
</feature>
<feature type="sequence variant" id="VAR_010911" description="In RRS1; dbSNP:rs1825070932." evidence="11">
    <original>C</original>
    <variation>Y</variation>
    <location>
        <position position="182"/>
    </location>
</feature>
<feature type="sequence variant" id="VAR_010768" description="In RRS1; dbSNP:rs121909084." evidence="10">
    <original>R</original>
    <variation>C</variation>
    <location>
        <position position="184"/>
    </location>
</feature>
<feature type="sequence variant" id="VAR_010769" description="In RRS1; dbSNP:rs199975149." evidence="10">
    <original>R</original>
    <variation>W</variation>
    <location>
        <position position="189"/>
    </location>
</feature>
<feature type="sequence variant" id="VAR_041787" description="In dbSNP:rs55737262." evidence="15">
    <original>R</original>
    <variation>Q</variation>
    <location>
        <position position="244"/>
    </location>
</feature>
<feature type="sequence variant" id="VAR_010912" description="In dbSNP:rs10820900." evidence="9 12 13 15 19">
    <original>T</original>
    <variation>A</variation>
    <location>
        <position position="245"/>
    </location>
</feature>
<feature type="sequence variant" id="VAR_041788" description="In dbSNP:rs55983376." evidence="15">
    <original>H</original>
    <variation>D</variation>
    <location>
        <position position="349"/>
    </location>
</feature>
<feature type="sequence variant" id="VAR_010770" description="In RRS1; dbSNP:rs2118683688." evidence="10">
    <original>R</original>
    <variation>W</variation>
    <location>
        <position position="366"/>
    </location>
</feature>
<feature type="sequence variant" id="VAR_041789" description="In dbSNP:rs56197744." evidence="15">
    <original>G</original>
    <variation>A</variation>
    <location>
        <position position="490"/>
    </location>
</feature>
<feature type="sequence variant" id="VAR_041790" description="In dbSNP:rs35852786." evidence="15">
    <original>R</original>
    <variation>Q</variation>
    <location>
        <position position="530"/>
    </location>
</feature>
<feature type="sequence variant" id="VAR_041791" description="In a colorectal adenocarcinoma sample; somatic mutation; dbSNP:rs140213020." evidence="15">
    <original>V</original>
    <variation>M</variation>
    <location>
        <position position="542"/>
    </location>
</feature>
<feature type="sequence variant" id="VAR_041792" description="In dbSNP:rs35764413." evidence="15">
    <original>P</original>
    <variation>S</variation>
    <location>
        <position position="548"/>
    </location>
</feature>
<feature type="sequence variant" id="VAR_041793" description="In dbSNP:rs56099091." evidence="15">
    <original>S</original>
    <variation>L</variation>
    <location>
        <position position="557"/>
    </location>
</feature>
<feature type="sequence variant" id="VAR_010771" description="In RRS1." evidence="10">
    <original>N</original>
    <variation>K</variation>
    <location>
        <position position="620"/>
    </location>
</feature>
<feature type="sequence variant" id="VAR_041794" description="In dbSNP:rs55798732." evidence="15">
    <original>D</original>
    <variation>N</variation>
    <location>
        <position position="644"/>
    </location>
</feature>
<feature type="sequence variant" id="VAR_041795" description="In dbSNP:rs55651110." evidence="15">
    <original>D</original>
    <variation>N</variation>
    <location>
        <position position="672"/>
    </location>
</feature>
<feature type="sequence variant" id="VAR_041796" description="In dbSNP:rs34431454." evidence="15">
    <original>G</original>
    <variation>R</variation>
    <location>
        <position position="695"/>
    </location>
</feature>
<feature type="sequence variant" id="VAR_041797" description="In dbSNP:rs56231927." evidence="15">
    <original>R</original>
    <variation>C</variation>
    <location>
        <position position="738"/>
    </location>
</feature>
<feature type="sequence variant" id="VAR_041798" description="In dbSNP:rs34491822." evidence="15">
    <original>S</original>
    <variation>L</variation>
    <location>
        <position position="762"/>
    </location>
</feature>
<feature type="sequence variant" id="VAR_010913" description="In dbSNP:rs10761129." evidence="9 15 19">
    <original>V</original>
    <variation>I</variation>
    <location>
        <position position="819"/>
    </location>
</feature>
<feature type="sequence variant" id="VAR_041799" description="In dbSNP:rs41277835." evidence="15">
    <original>D</original>
    <variation>E</variation>
    <location>
        <position position="935"/>
    </location>
</feature>
<feature type="mutagenesis site" description="Slight increase in kinase activity." evidence="17">
    <original>D</original>
    <variation>G</variation>
    <location>
        <position position="482"/>
    </location>
</feature>
<feature type="strand" evidence="23">
    <location>
        <begin position="174"/>
        <end position="176"/>
    </location>
</feature>
<feature type="helix" evidence="23">
    <location>
        <begin position="183"/>
        <end position="186"/>
    </location>
</feature>
<feature type="strand" evidence="23">
    <location>
        <begin position="190"/>
        <end position="192"/>
    </location>
</feature>
<feature type="strand" evidence="23">
    <location>
        <begin position="194"/>
        <end position="197"/>
    </location>
</feature>
<feature type="helix" evidence="23">
    <location>
        <begin position="198"/>
        <end position="216"/>
    </location>
</feature>
<feature type="helix" evidence="23">
    <location>
        <begin position="221"/>
        <end position="235"/>
    </location>
</feature>
<feature type="helix" evidence="23">
    <location>
        <begin position="253"/>
        <end position="261"/>
    </location>
</feature>
<feature type="turn" evidence="23">
    <location>
        <begin position="262"/>
        <end position="264"/>
    </location>
</feature>
<feature type="helix" evidence="23">
    <location>
        <begin position="265"/>
        <end position="273"/>
    </location>
</feature>
<feature type="helix" evidence="23">
    <location>
        <begin position="275"/>
        <end position="278"/>
    </location>
</feature>
<feature type="strand" evidence="23">
    <location>
        <begin position="279"/>
        <end position="281"/>
    </location>
</feature>
<feature type="helix" evidence="23">
    <location>
        <begin position="286"/>
        <end position="288"/>
    </location>
</feature>
<feature type="helix" evidence="23">
    <location>
        <begin position="295"/>
        <end position="297"/>
    </location>
</feature>
<feature type="helix" evidence="23">
    <location>
        <begin position="307"/>
        <end position="309"/>
    </location>
</feature>
<feature type="helix" evidence="23">
    <location>
        <begin position="311"/>
        <end position="313"/>
    </location>
</feature>
<feature type="strand" evidence="22">
    <location>
        <begin position="344"/>
        <end position="346"/>
    </location>
</feature>
<feature type="turn" evidence="22">
    <location>
        <begin position="352"/>
        <end position="354"/>
    </location>
</feature>
<feature type="helix" evidence="22">
    <location>
        <begin position="356"/>
        <end position="358"/>
    </location>
</feature>
<feature type="helix" evidence="22">
    <location>
        <begin position="368"/>
        <end position="370"/>
    </location>
</feature>
<feature type="strand" evidence="22">
    <location>
        <begin position="372"/>
        <end position="381"/>
    </location>
</feature>
<feature type="strand" evidence="22">
    <location>
        <begin position="385"/>
        <end position="389"/>
    </location>
</feature>
<feature type="helix" evidence="21">
    <location>
        <begin position="470"/>
        <end position="472"/>
    </location>
</feature>
<feature type="strand" evidence="21">
    <location>
        <begin position="473"/>
        <end position="481"/>
    </location>
</feature>
<feature type="strand" evidence="21">
    <location>
        <begin position="486"/>
        <end position="492"/>
    </location>
</feature>
<feature type="strand" evidence="21">
    <location>
        <begin position="502"/>
        <end position="508"/>
    </location>
</feature>
<feature type="helix" evidence="21">
    <location>
        <begin position="518"/>
        <end position="530"/>
    </location>
</feature>
<feature type="strand" evidence="21">
    <location>
        <begin position="539"/>
        <end position="543"/>
    </location>
</feature>
<feature type="strand" evidence="21">
    <location>
        <begin position="545"/>
        <end position="548"/>
    </location>
</feature>
<feature type="strand" evidence="21">
    <location>
        <begin position="550"/>
        <end position="554"/>
    </location>
</feature>
<feature type="helix" evidence="21">
    <location>
        <begin position="561"/>
        <end position="566"/>
    </location>
</feature>
<feature type="helix" evidence="21">
    <location>
        <begin position="589"/>
        <end position="608"/>
    </location>
</feature>
<feature type="helix" evidence="21">
    <location>
        <begin position="618"/>
        <end position="620"/>
    </location>
</feature>
<feature type="strand" evidence="21">
    <location>
        <begin position="621"/>
        <end position="623"/>
    </location>
</feature>
<feature type="helix" evidence="21">
    <location>
        <begin position="625"/>
        <end position="627"/>
    </location>
</feature>
<feature type="strand" evidence="21">
    <location>
        <begin position="629"/>
        <end position="631"/>
    </location>
</feature>
<feature type="helix" evidence="21">
    <location>
        <begin position="639"/>
        <end position="644"/>
    </location>
</feature>
<feature type="strand" evidence="21">
    <location>
        <begin position="648"/>
        <end position="652"/>
    </location>
</feature>
<feature type="helix" evidence="21">
    <location>
        <begin position="656"/>
        <end position="658"/>
    </location>
</feature>
<feature type="helix" evidence="21">
    <location>
        <begin position="661"/>
        <end position="666"/>
    </location>
</feature>
<feature type="helix" evidence="21">
    <location>
        <begin position="671"/>
        <end position="686"/>
    </location>
</feature>
<feature type="turn" evidence="21">
    <location>
        <begin position="687"/>
        <end position="689"/>
    </location>
</feature>
<feature type="turn" evidence="21">
    <location>
        <begin position="692"/>
        <end position="695"/>
    </location>
</feature>
<feature type="helix" evidence="21">
    <location>
        <begin position="698"/>
        <end position="706"/>
    </location>
</feature>
<feature type="helix" evidence="21">
    <location>
        <begin position="719"/>
        <end position="728"/>
    </location>
</feature>
<feature type="helix" evidence="21">
    <location>
        <begin position="733"/>
        <end position="735"/>
    </location>
</feature>
<feature type="helix" evidence="21">
    <location>
        <begin position="739"/>
        <end position="747"/>
    </location>
</feature>
<gene>
    <name type="primary">ROR2</name>
    <name type="synonym">NTRKR2</name>
</gene>